<keyword id="KW-0067">ATP-binding</keyword>
<keyword id="KW-0418">Kinase</keyword>
<keyword id="KW-0547">Nucleotide-binding</keyword>
<keyword id="KW-1185">Reference proteome</keyword>
<keyword id="KW-0808">Transferase</keyword>
<organism>
    <name type="scientific">Listeria monocytogenes serovar 1/2a (strain ATCC BAA-679 / EGD-e)</name>
    <dbReference type="NCBI Taxonomy" id="169963"/>
    <lineage>
        <taxon>Bacteria</taxon>
        <taxon>Bacillati</taxon>
        <taxon>Bacillota</taxon>
        <taxon>Bacilli</taxon>
        <taxon>Bacillales</taxon>
        <taxon>Listeriaceae</taxon>
        <taxon>Listeria</taxon>
    </lineage>
</organism>
<gene>
    <name evidence="1" type="primary">iolC</name>
    <name type="ordered locus">lmo0385</name>
</gene>
<proteinExistence type="inferred from homology"/>
<evidence type="ECO:0000255" key="1">
    <source>
        <dbReference type="HAMAP-Rule" id="MF_01668"/>
    </source>
</evidence>
<comment type="function">
    <text evidence="1">Catalyzes the phosphorylation of 5-dehydro-2-deoxy-D-gluconate (2-deoxy-5-keto-D-gluconate or DKG) to 6-phospho-5-dehydro-2-deoxy-D-gluconate (DKGP).</text>
</comment>
<comment type="catalytic activity">
    <reaction evidence="1">
        <text>5-dehydro-2-deoxy-D-gluconate + ATP = 6-phospho-5-dehydro-2-deoxy-D-gluconate + ADP + H(+)</text>
        <dbReference type="Rhea" id="RHEA:13497"/>
        <dbReference type="ChEBI" id="CHEBI:15378"/>
        <dbReference type="ChEBI" id="CHEBI:16669"/>
        <dbReference type="ChEBI" id="CHEBI:30616"/>
        <dbReference type="ChEBI" id="CHEBI:57949"/>
        <dbReference type="ChEBI" id="CHEBI:456216"/>
        <dbReference type="EC" id="2.7.1.92"/>
    </reaction>
</comment>
<comment type="pathway">
    <text evidence="1">Polyol metabolism; myo-inositol degradation into acetyl-CoA; acetyl-CoA from myo-inositol: step 5/7.</text>
</comment>
<comment type="similarity">
    <text evidence="1">Belongs to the carbohydrate kinase PfkB family.</text>
</comment>
<reference key="1">
    <citation type="journal article" date="2001" name="Science">
        <title>Comparative genomics of Listeria species.</title>
        <authorList>
            <person name="Glaser P."/>
            <person name="Frangeul L."/>
            <person name="Buchrieser C."/>
            <person name="Rusniok C."/>
            <person name="Amend A."/>
            <person name="Baquero F."/>
            <person name="Berche P."/>
            <person name="Bloecker H."/>
            <person name="Brandt P."/>
            <person name="Chakraborty T."/>
            <person name="Charbit A."/>
            <person name="Chetouani F."/>
            <person name="Couve E."/>
            <person name="de Daruvar A."/>
            <person name="Dehoux P."/>
            <person name="Domann E."/>
            <person name="Dominguez-Bernal G."/>
            <person name="Duchaud E."/>
            <person name="Durant L."/>
            <person name="Dussurget O."/>
            <person name="Entian K.-D."/>
            <person name="Fsihi H."/>
            <person name="Garcia-del Portillo F."/>
            <person name="Garrido P."/>
            <person name="Gautier L."/>
            <person name="Goebel W."/>
            <person name="Gomez-Lopez N."/>
            <person name="Hain T."/>
            <person name="Hauf J."/>
            <person name="Jackson D."/>
            <person name="Jones L.-M."/>
            <person name="Kaerst U."/>
            <person name="Kreft J."/>
            <person name="Kuhn M."/>
            <person name="Kunst F."/>
            <person name="Kurapkat G."/>
            <person name="Madueno E."/>
            <person name="Maitournam A."/>
            <person name="Mata Vicente J."/>
            <person name="Ng E."/>
            <person name="Nedjari H."/>
            <person name="Nordsiek G."/>
            <person name="Novella S."/>
            <person name="de Pablos B."/>
            <person name="Perez-Diaz J.-C."/>
            <person name="Purcell R."/>
            <person name="Remmel B."/>
            <person name="Rose M."/>
            <person name="Schlueter T."/>
            <person name="Simoes N."/>
            <person name="Tierrez A."/>
            <person name="Vazquez-Boland J.-A."/>
            <person name="Voss H."/>
            <person name="Wehland J."/>
            <person name="Cossart P."/>
        </authorList>
    </citation>
    <scope>NUCLEOTIDE SEQUENCE [LARGE SCALE GENOMIC DNA]</scope>
    <source>
        <strain>ATCC BAA-679 / EGD-e</strain>
    </source>
</reference>
<name>IOLC_LISMO</name>
<sequence>MNLKKHSERKFDLITVGRACIDLNAVEYNRPMEETMTFSKYVGGSPANIAIGTAKLGLKVGFIGKISDDQHGRFIEKYMRDLAINTDGMVKDTEGRKVGLAFTEIKSPDECSILMYRENVADLYLTPEEISEDYIKEARVLLISGTALAQSPSREAVLKAVSLARKNDVVVAFELDYRPYTWKNSEETAVYYSLVAEQADVIIGTRDEFDMMENQVGGKNEATKAYLFQHQAKIVVIKHGVEGSFAYTKAGETFQAQAYKTKVLKTFGAGDSYASAFLYGLFSDESIETALKYGSAAASIVVSKHSSSDAMPTADEIKALIAQAE</sequence>
<dbReference type="EC" id="2.7.1.92" evidence="1"/>
<dbReference type="EMBL" id="AL591975">
    <property type="protein sequence ID" value="CAC98464.1"/>
    <property type="molecule type" value="Genomic_DNA"/>
</dbReference>
<dbReference type="PIR" id="AB1123">
    <property type="entry name" value="AB1123"/>
</dbReference>
<dbReference type="RefSeq" id="NP_463915.1">
    <property type="nucleotide sequence ID" value="NC_003210.1"/>
</dbReference>
<dbReference type="RefSeq" id="WP_010989446.1">
    <property type="nucleotide sequence ID" value="NC_003210.1"/>
</dbReference>
<dbReference type="SMR" id="Q8Y9Y2"/>
<dbReference type="STRING" id="169963.gene:17593036"/>
<dbReference type="PaxDb" id="169963-lmo0385"/>
<dbReference type="EnsemblBacteria" id="CAC98464">
    <property type="protein sequence ID" value="CAC98464"/>
    <property type="gene ID" value="CAC98464"/>
</dbReference>
<dbReference type="GeneID" id="987641"/>
<dbReference type="KEGG" id="lmo:lmo0385"/>
<dbReference type="PATRIC" id="fig|169963.11.peg.398"/>
<dbReference type="eggNOG" id="COG0524">
    <property type="taxonomic scope" value="Bacteria"/>
</dbReference>
<dbReference type="HOGENOM" id="CLU_027634_6_0_9"/>
<dbReference type="OrthoDB" id="9813569at2"/>
<dbReference type="PhylomeDB" id="Q8Y9Y2"/>
<dbReference type="BioCyc" id="LMON169963:LMO0385-MONOMER"/>
<dbReference type="UniPathway" id="UPA00076">
    <property type="reaction ID" value="UER00146"/>
</dbReference>
<dbReference type="Proteomes" id="UP000000817">
    <property type="component" value="Chromosome"/>
</dbReference>
<dbReference type="GO" id="GO:0047590">
    <property type="term" value="F:5-dehydro-2-deoxygluconokinase activity"/>
    <property type="evidence" value="ECO:0007669"/>
    <property type="project" value="UniProtKB-UniRule"/>
</dbReference>
<dbReference type="GO" id="GO:0005524">
    <property type="term" value="F:ATP binding"/>
    <property type="evidence" value="ECO:0007669"/>
    <property type="project" value="UniProtKB-UniRule"/>
</dbReference>
<dbReference type="GO" id="GO:0019310">
    <property type="term" value="P:inositol catabolic process"/>
    <property type="evidence" value="ECO:0007669"/>
    <property type="project" value="UniProtKB-UniRule"/>
</dbReference>
<dbReference type="CDD" id="cd01166">
    <property type="entry name" value="KdgK"/>
    <property type="match status" value="1"/>
</dbReference>
<dbReference type="Gene3D" id="3.40.1190.20">
    <property type="match status" value="1"/>
</dbReference>
<dbReference type="Gene3D" id="2.20.150.10">
    <property type="entry name" value="putative 5-dehydro-2- deoxygluconokinase"/>
    <property type="match status" value="1"/>
</dbReference>
<dbReference type="HAMAP" id="MF_01668">
    <property type="entry name" value="IolC"/>
    <property type="match status" value="1"/>
</dbReference>
<dbReference type="InterPro" id="IPR002173">
    <property type="entry name" value="Carboh/pur_kinase_PfkB_CS"/>
</dbReference>
<dbReference type="InterPro" id="IPR022841">
    <property type="entry name" value="DKG_kinase_firmi"/>
</dbReference>
<dbReference type="InterPro" id="IPR030830">
    <property type="entry name" value="Myo_inos_IolC"/>
</dbReference>
<dbReference type="InterPro" id="IPR023314">
    <property type="entry name" value="Myo_inos_IolC-like_sf"/>
</dbReference>
<dbReference type="InterPro" id="IPR050306">
    <property type="entry name" value="PfkB_Carbo_kinase"/>
</dbReference>
<dbReference type="InterPro" id="IPR011611">
    <property type="entry name" value="PfkB_dom"/>
</dbReference>
<dbReference type="InterPro" id="IPR029056">
    <property type="entry name" value="Ribokinase-like"/>
</dbReference>
<dbReference type="NCBIfam" id="TIGR04382">
    <property type="entry name" value="myo_inos_iolC_N"/>
    <property type="match status" value="1"/>
</dbReference>
<dbReference type="PANTHER" id="PTHR43085:SF49">
    <property type="entry name" value="5-DEHYDRO-2-DEOXYGLUCONOKINASE"/>
    <property type="match status" value="1"/>
</dbReference>
<dbReference type="PANTHER" id="PTHR43085">
    <property type="entry name" value="HEXOKINASE FAMILY MEMBER"/>
    <property type="match status" value="1"/>
</dbReference>
<dbReference type="Pfam" id="PF00294">
    <property type="entry name" value="PfkB"/>
    <property type="match status" value="1"/>
</dbReference>
<dbReference type="SUPFAM" id="SSF53613">
    <property type="entry name" value="Ribokinase-like"/>
    <property type="match status" value="1"/>
</dbReference>
<dbReference type="PROSITE" id="PS00584">
    <property type="entry name" value="PFKB_KINASES_2"/>
    <property type="match status" value="1"/>
</dbReference>
<protein>
    <recommendedName>
        <fullName evidence="1">5-dehydro-2-deoxygluconokinase</fullName>
        <ecNumber evidence="1">2.7.1.92</ecNumber>
    </recommendedName>
    <alternativeName>
        <fullName evidence="1">2-deoxy-5-keto-D-gluconate kinase</fullName>
        <shortName evidence="1">DKG kinase</shortName>
    </alternativeName>
</protein>
<feature type="chain" id="PRO_0000352303" description="5-dehydro-2-deoxygluconokinase">
    <location>
        <begin position="1"/>
        <end position="325"/>
    </location>
</feature>
<accession>Q8Y9Y2</accession>